<protein>
    <recommendedName>
        <fullName evidence="1">Cyclic pyranopterin monophosphate synthase</fullName>
        <ecNumber evidence="1">4.6.1.17</ecNumber>
    </recommendedName>
    <alternativeName>
        <fullName evidence="1">Molybdenum cofactor biosynthesis protein C</fullName>
    </alternativeName>
</protein>
<gene>
    <name evidence="1" type="primary">moaC</name>
    <name type="ordered locus">Ssed_4400</name>
</gene>
<accession>A8G1M9</accession>
<reference key="1">
    <citation type="submission" date="2007-08" db="EMBL/GenBank/DDBJ databases">
        <title>Complete sequence of Shewanella sediminis HAW-EB3.</title>
        <authorList>
            <consortium name="US DOE Joint Genome Institute"/>
            <person name="Copeland A."/>
            <person name="Lucas S."/>
            <person name="Lapidus A."/>
            <person name="Barry K."/>
            <person name="Glavina del Rio T."/>
            <person name="Dalin E."/>
            <person name="Tice H."/>
            <person name="Pitluck S."/>
            <person name="Chertkov O."/>
            <person name="Brettin T."/>
            <person name="Bruce D."/>
            <person name="Detter J.C."/>
            <person name="Han C."/>
            <person name="Schmutz J."/>
            <person name="Larimer F."/>
            <person name="Land M."/>
            <person name="Hauser L."/>
            <person name="Kyrpides N."/>
            <person name="Kim E."/>
            <person name="Zhao J.-S."/>
            <person name="Richardson P."/>
        </authorList>
    </citation>
    <scope>NUCLEOTIDE SEQUENCE [LARGE SCALE GENOMIC DNA]</scope>
    <source>
        <strain>HAW-EB3</strain>
    </source>
</reference>
<dbReference type="EC" id="4.6.1.17" evidence="1"/>
<dbReference type="EMBL" id="CP000821">
    <property type="protein sequence ID" value="ABV39002.1"/>
    <property type="molecule type" value="Genomic_DNA"/>
</dbReference>
<dbReference type="RefSeq" id="WP_012144729.1">
    <property type="nucleotide sequence ID" value="NC_009831.1"/>
</dbReference>
<dbReference type="SMR" id="A8G1M9"/>
<dbReference type="STRING" id="425104.Ssed_4400"/>
<dbReference type="KEGG" id="sse:Ssed_4400"/>
<dbReference type="eggNOG" id="COG0315">
    <property type="taxonomic scope" value="Bacteria"/>
</dbReference>
<dbReference type="HOGENOM" id="CLU_074693_1_1_6"/>
<dbReference type="OrthoDB" id="9794429at2"/>
<dbReference type="UniPathway" id="UPA00344"/>
<dbReference type="Proteomes" id="UP000002015">
    <property type="component" value="Chromosome"/>
</dbReference>
<dbReference type="GO" id="GO:0061799">
    <property type="term" value="F:cyclic pyranopterin monophosphate synthase activity"/>
    <property type="evidence" value="ECO:0007669"/>
    <property type="project" value="UniProtKB-UniRule"/>
</dbReference>
<dbReference type="GO" id="GO:0061798">
    <property type="term" value="F:GTP 3',8'-cyclase activity"/>
    <property type="evidence" value="ECO:0007669"/>
    <property type="project" value="TreeGrafter"/>
</dbReference>
<dbReference type="GO" id="GO:0006777">
    <property type="term" value="P:Mo-molybdopterin cofactor biosynthetic process"/>
    <property type="evidence" value="ECO:0007669"/>
    <property type="project" value="UniProtKB-UniRule"/>
</dbReference>
<dbReference type="CDD" id="cd01420">
    <property type="entry name" value="MoaC_PE"/>
    <property type="match status" value="1"/>
</dbReference>
<dbReference type="FunFam" id="3.30.70.640:FF:000001">
    <property type="entry name" value="Cyclic pyranopterin monophosphate synthase"/>
    <property type="match status" value="1"/>
</dbReference>
<dbReference type="Gene3D" id="3.30.70.640">
    <property type="entry name" value="Molybdopterin cofactor biosynthesis C (MoaC) domain"/>
    <property type="match status" value="1"/>
</dbReference>
<dbReference type="HAMAP" id="MF_01224_B">
    <property type="entry name" value="MoaC_B"/>
    <property type="match status" value="1"/>
</dbReference>
<dbReference type="InterPro" id="IPR023045">
    <property type="entry name" value="MoaC"/>
</dbReference>
<dbReference type="InterPro" id="IPR047594">
    <property type="entry name" value="MoaC_bact/euk"/>
</dbReference>
<dbReference type="InterPro" id="IPR036522">
    <property type="entry name" value="MoaC_sf"/>
</dbReference>
<dbReference type="InterPro" id="IPR050105">
    <property type="entry name" value="MoCo_biosynth_MoaA/MoaC"/>
</dbReference>
<dbReference type="InterPro" id="IPR002820">
    <property type="entry name" value="Mopterin_CF_biosynth-C_dom"/>
</dbReference>
<dbReference type="NCBIfam" id="TIGR00581">
    <property type="entry name" value="moaC"/>
    <property type="match status" value="1"/>
</dbReference>
<dbReference type="NCBIfam" id="NF006870">
    <property type="entry name" value="PRK09364.1"/>
    <property type="match status" value="1"/>
</dbReference>
<dbReference type="PANTHER" id="PTHR22960:SF0">
    <property type="entry name" value="MOLYBDENUM COFACTOR BIOSYNTHESIS PROTEIN 1"/>
    <property type="match status" value="1"/>
</dbReference>
<dbReference type="PANTHER" id="PTHR22960">
    <property type="entry name" value="MOLYBDOPTERIN COFACTOR SYNTHESIS PROTEIN A"/>
    <property type="match status" value="1"/>
</dbReference>
<dbReference type="Pfam" id="PF01967">
    <property type="entry name" value="MoaC"/>
    <property type="match status" value="1"/>
</dbReference>
<dbReference type="SUPFAM" id="SSF55040">
    <property type="entry name" value="Molybdenum cofactor biosynthesis protein C, MoaC"/>
    <property type="match status" value="1"/>
</dbReference>
<proteinExistence type="inferred from homology"/>
<keyword id="KW-0456">Lyase</keyword>
<keyword id="KW-0501">Molybdenum cofactor biosynthesis</keyword>
<keyword id="KW-1185">Reference proteome</keyword>
<feature type="chain" id="PRO_1000085687" description="Cyclic pyranopterin monophosphate synthase">
    <location>
        <begin position="1"/>
        <end position="158"/>
    </location>
</feature>
<feature type="active site" evidence="1">
    <location>
        <position position="129"/>
    </location>
</feature>
<feature type="binding site" evidence="1">
    <location>
        <begin position="76"/>
        <end position="78"/>
    </location>
    <ligand>
        <name>substrate</name>
    </ligand>
</feature>
<feature type="binding site" evidence="1">
    <location>
        <begin position="114"/>
        <end position="115"/>
    </location>
    <ligand>
        <name>substrate</name>
    </ligand>
</feature>
<name>MOAC_SHESH</name>
<organism>
    <name type="scientific">Shewanella sediminis (strain HAW-EB3)</name>
    <dbReference type="NCBI Taxonomy" id="425104"/>
    <lineage>
        <taxon>Bacteria</taxon>
        <taxon>Pseudomonadati</taxon>
        <taxon>Pseudomonadota</taxon>
        <taxon>Gammaproteobacteria</taxon>
        <taxon>Alteromonadales</taxon>
        <taxon>Shewanellaceae</taxon>
        <taxon>Shewanella</taxon>
    </lineage>
</organism>
<sequence>MSNEFTHINADGNAHMVDVTEKAVTEREARAEAYIEMAADTLEMIMSGSHHKGDVFATARIAGIQAAKKTSDLIPLCHPLMLTKVEVELEAQPEFNRVRITSLCKLSGKTGVEMEALTAASVAALTIYDMCKAVQKDMVISQTRLLEKRGGKSGHFKV</sequence>
<comment type="function">
    <text evidence="1">Catalyzes the conversion of (8S)-3',8-cyclo-7,8-dihydroguanosine 5'-triphosphate to cyclic pyranopterin monophosphate (cPMP).</text>
</comment>
<comment type="catalytic activity">
    <reaction evidence="1">
        <text>(8S)-3',8-cyclo-7,8-dihydroguanosine 5'-triphosphate = cyclic pyranopterin phosphate + diphosphate</text>
        <dbReference type="Rhea" id="RHEA:49580"/>
        <dbReference type="ChEBI" id="CHEBI:33019"/>
        <dbReference type="ChEBI" id="CHEBI:59648"/>
        <dbReference type="ChEBI" id="CHEBI:131766"/>
        <dbReference type="EC" id="4.6.1.17"/>
    </reaction>
</comment>
<comment type="pathway">
    <text evidence="1">Cofactor biosynthesis; molybdopterin biosynthesis.</text>
</comment>
<comment type="subunit">
    <text evidence="1">Homohexamer; trimer of dimers.</text>
</comment>
<comment type="similarity">
    <text evidence="1">Belongs to the MoaC family.</text>
</comment>
<evidence type="ECO:0000255" key="1">
    <source>
        <dbReference type="HAMAP-Rule" id="MF_01224"/>
    </source>
</evidence>